<protein>
    <recommendedName>
        <fullName>DNA-binding protein RFX8</fullName>
    </recommendedName>
    <alternativeName>
        <fullName>Regulatory factor X 8</fullName>
    </alternativeName>
</protein>
<accession>Q6ZV50</accession>
<accession>B4DQ32</accession>
<reference key="1">
    <citation type="journal article" date="2004" name="Nat. Genet.">
        <title>Complete sequencing and characterization of 21,243 full-length human cDNAs.</title>
        <authorList>
            <person name="Ota T."/>
            <person name="Suzuki Y."/>
            <person name="Nishikawa T."/>
            <person name="Otsuki T."/>
            <person name="Sugiyama T."/>
            <person name="Irie R."/>
            <person name="Wakamatsu A."/>
            <person name="Hayashi K."/>
            <person name="Sato H."/>
            <person name="Nagai K."/>
            <person name="Kimura K."/>
            <person name="Makita H."/>
            <person name="Sekine M."/>
            <person name="Obayashi M."/>
            <person name="Nishi T."/>
            <person name="Shibahara T."/>
            <person name="Tanaka T."/>
            <person name="Ishii S."/>
            <person name="Yamamoto J."/>
            <person name="Saito K."/>
            <person name="Kawai Y."/>
            <person name="Isono Y."/>
            <person name="Nakamura Y."/>
            <person name="Nagahari K."/>
            <person name="Murakami K."/>
            <person name="Yasuda T."/>
            <person name="Iwayanagi T."/>
            <person name="Wagatsuma M."/>
            <person name="Shiratori A."/>
            <person name="Sudo H."/>
            <person name="Hosoiri T."/>
            <person name="Kaku Y."/>
            <person name="Kodaira H."/>
            <person name="Kondo H."/>
            <person name="Sugawara M."/>
            <person name="Takahashi M."/>
            <person name="Kanda K."/>
            <person name="Yokoi T."/>
            <person name="Furuya T."/>
            <person name="Kikkawa E."/>
            <person name="Omura Y."/>
            <person name="Abe K."/>
            <person name="Kamihara K."/>
            <person name="Katsuta N."/>
            <person name="Sato K."/>
            <person name="Tanikawa M."/>
            <person name="Yamazaki M."/>
            <person name="Ninomiya K."/>
            <person name="Ishibashi T."/>
            <person name="Yamashita H."/>
            <person name="Murakawa K."/>
            <person name="Fujimori K."/>
            <person name="Tanai H."/>
            <person name="Kimata M."/>
            <person name="Watanabe M."/>
            <person name="Hiraoka S."/>
            <person name="Chiba Y."/>
            <person name="Ishida S."/>
            <person name="Ono Y."/>
            <person name="Takiguchi S."/>
            <person name="Watanabe S."/>
            <person name="Yosida M."/>
            <person name="Hotuta T."/>
            <person name="Kusano J."/>
            <person name="Kanehori K."/>
            <person name="Takahashi-Fujii A."/>
            <person name="Hara H."/>
            <person name="Tanase T.-O."/>
            <person name="Nomura Y."/>
            <person name="Togiya S."/>
            <person name="Komai F."/>
            <person name="Hara R."/>
            <person name="Takeuchi K."/>
            <person name="Arita M."/>
            <person name="Imose N."/>
            <person name="Musashino K."/>
            <person name="Yuuki H."/>
            <person name="Oshima A."/>
            <person name="Sasaki N."/>
            <person name="Aotsuka S."/>
            <person name="Yoshikawa Y."/>
            <person name="Matsunawa H."/>
            <person name="Ichihara T."/>
            <person name="Shiohata N."/>
            <person name="Sano S."/>
            <person name="Moriya S."/>
            <person name="Momiyama H."/>
            <person name="Satoh N."/>
            <person name="Takami S."/>
            <person name="Terashima Y."/>
            <person name="Suzuki O."/>
            <person name="Nakagawa S."/>
            <person name="Senoh A."/>
            <person name="Mizoguchi H."/>
            <person name="Goto Y."/>
            <person name="Shimizu F."/>
            <person name="Wakebe H."/>
            <person name="Hishigaki H."/>
            <person name="Watanabe T."/>
            <person name="Sugiyama A."/>
            <person name="Takemoto M."/>
            <person name="Kawakami B."/>
            <person name="Yamazaki M."/>
            <person name="Watanabe K."/>
            <person name="Kumagai A."/>
            <person name="Itakura S."/>
            <person name="Fukuzumi Y."/>
            <person name="Fujimori Y."/>
            <person name="Komiyama M."/>
            <person name="Tashiro H."/>
            <person name="Tanigami A."/>
            <person name="Fujiwara T."/>
            <person name="Ono T."/>
            <person name="Yamada K."/>
            <person name="Fujii Y."/>
            <person name="Ozaki K."/>
            <person name="Hirao M."/>
            <person name="Ohmori Y."/>
            <person name="Kawabata A."/>
            <person name="Hikiji T."/>
            <person name="Kobatake N."/>
            <person name="Inagaki H."/>
            <person name="Ikema Y."/>
            <person name="Okamoto S."/>
            <person name="Okitani R."/>
            <person name="Kawakami T."/>
            <person name="Noguchi S."/>
            <person name="Itoh T."/>
            <person name="Shigeta K."/>
            <person name="Senba T."/>
            <person name="Matsumura K."/>
            <person name="Nakajima Y."/>
            <person name="Mizuno T."/>
            <person name="Morinaga M."/>
            <person name="Sasaki M."/>
            <person name="Togashi T."/>
            <person name="Oyama M."/>
            <person name="Hata H."/>
            <person name="Watanabe M."/>
            <person name="Komatsu T."/>
            <person name="Mizushima-Sugano J."/>
            <person name="Satoh T."/>
            <person name="Shirai Y."/>
            <person name="Takahashi Y."/>
            <person name="Nakagawa K."/>
            <person name="Okumura K."/>
            <person name="Nagase T."/>
            <person name="Nomura N."/>
            <person name="Kikuchi H."/>
            <person name="Masuho Y."/>
            <person name="Yamashita R."/>
            <person name="Nakai K."/>
            <person name="Yada T."/>
            <person name="Nakamura Y."/>
            <person name="Ohara O."/>
            <person name="Isogai T."/>
            <person name="Sugano S."/>
        </authorList>
    </citation>
    <scope>NUCLEOTIDE SEQUENCE [LARGE SCALE MRNA] (ISOFORMS 2 AND 3)</scope>
    <source>
        <tissue>Thalamus</tissue>
    </source>
</reference>
<reference key="2">
    <citation type="journal article" date="2005" name="Nature">
        <title>Generation and annotation of the DNA sequences of human chromosomes 2 and 4.</title>
        <authorList>
            <person name="Hillier L.W."/>
            <person name="Graves T.A."/>
            <person name="Fulton R.S."/>
            <person name="Fulton L.A."/>
            <person name="Pepin K.H."/>
            <person name="Minx P."/>
            <person name="Wagner-McPherson C."/>
            <person name="Layman D."/>
            <person name="Wylie K."/>
            <person name="Sekhon M."/>
            <person name="Becker M.C."/>
            <person name="Fewell G.A."/>
            <person name="Delehaunty K.D."/>
            <person name="Miner T.L."/>
            <person name="Nash W.E."/>
            <person name="Kremitzki C."/>
            <person name="Oddy L."/>
            <person name="Du H."/>
            <person name="Sun H."/>
            <person name="Bradshaw-Cordum H."/>
            <person name="Ali J."/>
            <person name="Carter J."/>
            <person name="Cordes M."/>
            <person name="Harris A."/>
            <person name="Isak A."/>
            <person name="van Brunt A."/>
            <person name="Nguyen C."/>
            <person name="Du F."/>
            <person name="Courtney L."/>
            <person name="Kalicki J."/>
            <person name="Ozersky P."/>
            <person name="Abbott S."/>
            <person name="Armstrong J."/>
            <person name="Belter E.A."/>
            <person name="Caruso L."/>
            <person name="Cedroni M."/>
            <person name="Cotton M."/>
            <person name="Davidson T."/>
            <person name="Desai A."/>
            <person name="Elliott G."/>
            <person name="Erb T."/>
            <person name="Fronick C."/>
            <person name="Gaige T."/>
            <person name="Haakenson W."/>
            <person name="Haglund K."/>
            <person name="Holmes A."/>
            <person name="Harkins R."/>
            <person name="Kim K."/>
            <person name="Kruchowski S.S."/>
            <person name="Strong C.M."/>
            <person name="Grewal N."/>
            <person name="Goyea E."/>
            <person name="Hou S."/>
            <person name="Levy A."/>
            <person name="Martinka S."/>
            <person name="Mead K."/>
            <person name="McLellan M.D."/>
            <person name="Meyer R."/>
            <person name="Randall-Maher J."/>
            <person name="Tomlinson C."/>
            <person name="Dauphin-Kohlberg S."/>
            <person name="Kozlowicz-Reilly A."/>
            <person name="Shah N."/>
            <person name="Swearengen-Shahid S."/>
            <person name="Snider J."/>
            <person name="Strong J.T."/>
            <person name="Thompson J."/>
            <person name="Yoakum M."/>
            <person name="Leonard S."/>
            <person name="Pearman C."/>
            <person name="Trani L."/>
            <person name="Radionenko M."/>
            <person name="Waligorski J.E."/>
            <person name="Wang C."/>
            <person name="Rock S.M."/>
            <person name="Tin-Wollam A.-M."/>
            <person name="Maupin R."/>
            <person name="Latreille P."/>
            <person name="Wendl M.C."/>
            <person name="Yang S.-P."/>
            <person name="Pohl C."/>
            <person name="Wallis J.W."/>
            <person name="Spieth J."/>
            <person name="Bieri T.A."/>
            <person name="Berkowicz N."/>
            <person name="Nelson J.O."/>
            <person name="Osborne J."/>
            <person name="Ding L."/>
            <person name="Meyer R."/>
            <person name="Sabo A."/>
            <person name="Shotland Y."/>
            <person name="Sinha P."/>
            <person name="Wohldmann P.E."/>
            <person name="Cook L.L."/>
            <person name="Hickenbotham M.T."/>
            <person name="Eldred J."/>
            <person name="Williams D."/>
            <person name="Jones T.A."/>
            <person name="She X."/>
            <person name="Ciccarelli F.D."/>
            <person name="Izaurralde E."/>
            <person name="Taylor J."/>
            <person name="Schmutz J."/>
            <person name="Myers R.M."/>
            <person name="Cox D.R."/>
            <person name="Huang X."/>
            <person name="McPherson J.D."/>
            <person name="Mardis E.R."/>
            <person name="Clifton S.W."/>
            <person name="Warren W.C."/>
            <person name="Chinwalla A.T."/>
            <person name="Eddy S.R."/>
            <person name="Marra M.A."/>
            <person name="Ovcharenko I."/>
            <person name="Furey T.S."/>
            <person name="Miller W."/>
            <person name="Eichler E.E."/>
            <person name="Bork P."/>
            <person name="Suyama M."/>
            <person name="Torrents D."/>
            <person name="Waterston R.H."/>
            <person name="Wilson R.K."/>
        </authorList>
    </citation>
    <scope>NUCLEOTIDE SEQUENCE [LARGE SCALE GENOMIC DNA]</scope>
</reference>
<gene>
    <name type="primary">RFX8</name>
</gene>
<name>RFX8_HUMAN</name>
<feature type="chain" id="PRO_0000325808" description="DNA-binding protein RFX8">
    <location>
        <begin position="1"/>
        <end position="586"/>
    </location>
</feature>
<feature type="DNA-binding region" description="RFX-type winged-helix" evidence="2">
    <location>
        <begin position="22"/>
        <end position="97"/>
    </location>
</feature>
<feature type="splice variant" id="VSP_039427" description="In isoform 2 and isoform 3." evidence="3">
    <location>
        <begin position="1"/>
        <end position="42"/>
    </location>
</feature>
<feature type="splice variant" id="VSP_039428" description="In isoform 2." evidence="3">
    <location>
        <begin position="67"/>
        <end position="174"/>
    </location>
</feature>
<feature type="splice variant" id="VSP_039429" description="In isoform 3." evidence="3">
    <location>
        <begin position="67"/>
        <end position="137"/>
    </location>
</feature>
<feature type="splice variant" id="VSP_039430" description="In isoform 2." evidence="3">
    <original>ED</original>
    <variation>RN</variation>
    <location>
        <begin position="194"/>
        <end position="195"/>
    </location>
</feature>
<feature type="splice variant" id="VSP_039431" description="In isoform 2." evidence="3">
    <location>
        <begin position="196"/>
        <end position="586"/>
    </location>
</feature>
<feature type="sequence conflict" description="In Ref. 1; BAG60794." evidence="4" ref="1">
    <original>Q</original>
    <variation>L</variation>
    <location>
        <position position="166"/>
    </location>
</feature>
<feature type="sequence conflict" description="In Ref. 1; BAG60794." evidence="4" ref="1">
    <original>M</original>
    <variation>T</variation>
    <location>
        <position position="525"/>
    </location>
</feature>
<feature type="sequence conflict" description="In Ref. 1; BAC86013." evidence="4" ref="1">
    <original>S</original>
    <variation>N</variation>
    <location>
        <position position="573"/>
    </location>
</feature>
<organism>
    <name type="scientific">Homo sapiens</name>
    <name type="common">Human</name>
    <dbReference type="NCBI Taxonomy" id="9606"/>
    <lineage>
        <taxon>Eukaryota</taxon>
        <taxon>Metazoa</taxon>
        <taxon>Chordata</taxon>
        <taxon>Craniata</taxon>
        <taxon>Vertebrata</taxon>
        <taxon>Euteleostomi</taxon>
        <taxon>Mammalia</taxon>
        <taxon>Eutheria</taxon>
        <taxon>Euarchontoglires</taxon>
        <taxon>Primates</taxon>
        <taxon>Haplorrhini</taxon>
        <taxon>Catarrhini</taxon>
        <taxon>Hominidae</taxon>
        <taxon>Homo</taxon>
    </lineage>
</organism>
<sequence length="586" mass="66266">MAEGVPASPSSGEGSRGPHSGVIQWLVDNFCICEECSVPRCLMYEIYVETCGQNTENQVNPATFGKLVRLVFPDLGTRRLGTRGSARYHYDGICIKKSSFFYAQYCYLIGEKRYHSGDAIAFEKSTNYNSIIQQEATCEDHSPMKTDPVGSPLSEFRRCPFLEQEQAKKYSCNMMAFLADEYCNYCRDILRNVEDLLTSFWKSLQQDTVMLMSLPDVCQLFKCYDVQLYKGIEDVLLHDFLEDVSIQYLKSVQLFSKKFKLWLLNALEGVPALLQISKLKEVTLFVKRLRRKTYLSNMAKTMRMVLKSKRRVSVLKSDLQAIINQGTLATSKKALASDRSGADELENNPEMKCLRNLISLLGTSTDLRVFLSCLSSHLQAFVFQTSRSKEEFTKLAASFQLRWNLLLTAVSKAMTLCHRDSFGSWHLFHLLLLEYMIHILQSCLEEEEEEEDMGTVKEMLPDDPTLGQPDQALFHSLNSSLSQACASPSMEPLGVMPTHMGQGRYPVGVSNMVLRILGFLVDTAMGNKLIQVLLEDETTESAVKLSLPMGQEALITLKDGQQFVIQISDVPQSSEDIYFRENNANV</sequence>
<dbReference type="EMBL" id="AK124976">
    <property type="protein sequence ID" value="BAC86013.1"/>
    <property type="molecule type" value="mRNA"/>
</dbReference>
<dbReference type="EMBL" id="AK298610">
    <property type="protein sequence ID" value="BAG60794.1"/>
    <property type="molecule type" value="mRNA"/>
</dbReference>
<dbReference type="EMBL" id="AC092570">
    <property type="status" value="NOT_ANNOTATED_CDS"/>
    <property type="molecule type" value="Genomic_DNA"/>
</dbReference>
<dbReference type="CCDS" id="CCDS46376.1">
    <molecule id="Q6ZV50-3"/>
</dbReference>
<dbReference type="RefSeq" id="NP_001139136.2">
    <molecule id="Q6ZV50-3"/>
    <property type="nucleotide sequence ID" value="NM_001145664.2"/>
</dbReference>
<dbReference type="RefSeq" id="XP_016860340.1">
    <molecule id="Q6ZV50-1"/>
    <property type="nucleotide sequence ID" value="XM_017004851.2"/>
</dbReference>
<dbReference type="SMR" id="Q6ZV50"/>
<dbReference type="BioGRID" id="611561">
    <property type="interactions" value="1"/>
</dbReference>
<dbReference type="FunCoup" id="Q6ZV50">
    <property type="interactions" value="78"/>
</dbReference>
<dbReference type="STRING" id="9606.ENSP00000401536"/>
<dbReference type="GlyGen" id="Q6ZV50">
    <property type="glycosylation" value="1 site, 1 O-linked glycan (1 site)"/>
</dbReference>
<dbReference type="iPTMnet" id="Q6ZV50"/>
<dbReference type="PhosphoSitePlus" id="Q6ZV50"/>
<dbReference type="BioMuta" id="RFX8"/>
<dbReference type="DMDM" id="172046177"/>
<dbReference type="jPOST" id="Q6ZV50"/>
<dbReference type="MassIVE" id="Q6ZV50"/>
<dbReference type="PeptideAtlas" id="Q6ZV50"/>
<dbReference type="ProteomicsDB" id="68385">
    <molecule id="Q6ZV50-1"/>
</dbReference>
<dbReference type="ProteomicsDB" id="68387">
    <molecule id="Q6ZV50-3"/>
</dbReference>
<dbReference type="Antibodypedia" id="55182">
    <property type="antibodies" value="16 antibodies from 8 providers"/>
</dbReference>
<dbReference type="DNASU" id="731220"/>
<dbReference type="Ensembl" id="ENST00000428343.6">
    <molecule id="Q6ZV50-3"/>
    <property type="protein sequence ID" value="ENSP00000401536.1"/>
    <property type="gene ID" value="ENSG00000196460.14"/>
</dbReference>
<dbReference type="Ensembl" id="ENST00000646893.2">
    <molecule id="Q6ZV50-1"/>
    <property type="protein sequence ID" value="ENSP00000494249.2"/>
    <property type="gene ID" value="ENSG00000196460.14"/>
</dbReference>
<dbReference type="GeneID" id="731220"/>
<dbReference type="KEGG" id="hsa:731220"/>
<dbReference type="MANE-Select" id="ENST00000428343.6">
    <molecule id="Q6ZV50-3"/>
    <property type="protein sequence ID" value="ENSP00000401536.1"/>
    <property type="RefSeq nucleotide sequence ID" value="NM_001145664.2"/>
    <property type="RefSeq protein sequence ID" value="NP_001139136.2"/>
</dbReference>
<dbReference type="UCSC" id="uc010yvx.2">
    <molecule id="Q6ZV50-1"/>
    <property type="organism name" value="human"/>
</dbReference>
<dbReference type="AGR" id="HGNC:37253"/>
<dbReference type="CTD" id="731220"/>
<dbReference type="DisGeNET" id="731220"/>
<dbReference type="GeneCards" id="RFX8"/>
<dbReference type="HGNC" id="HGNC:37253">
    <property type="gene designation" value="RFX8"/>
</dbReference>
<dbReference type="HPA" id="ENSG00000196460">
    <property type="expression patterns" value="Tissue enhanced (bone)"/>
</dbReference>
<dbReference type="neXtProt" id="NX_Q6ZV50"/>
<dbReference type="OpenTargets" id="ENSG00000196460"/>
<dbReference type="PharmGKB" id="PA165697419"/>
<dbReference type="VEuPathDB" id="HostDB:ENSG00000196460"/>
<dbReference type="eggNOG" id="KOG3712">
    <property type="taxonomic scope" value="Eukaryota"/>
</dbReference>
<dbReference type="GeneTree" id="ENSGT01050000244879"/>
<dbReference type="HOGENOM" id="CLU_039469_0_0_1"/>
<dbReference type="InParanoid" id="Q6ZV50"/>
<dbReference type="OrthoDB" id="10056949at2759"/>
<dbReference type="PAN-GO" id="Q6ZV50">
    <property type="GO annotations" value="3 GO annotations based on evolutionary models"/>
</dbReference>
<dbReference type="PhylomeDB" id="Q6ZV50"/>
<dbReference type="TreeFam" id="TF342109"/>
<dbReference type="PathwayCommons" id="Q6ZV50"/>
<dbReference type="BioGRID-ORCS" id="731220">
    <property type="hits" value="11 hits in 1149 CRISPR screens"/>
</dbReference>
<dbReference type="ChiTaRS" id="RFX8">
    <property type="organism name" value="human"/>
</dbReference>
<dbReference type="GenomeRNAi" id="731220"/>
<dbReference type="Pharos" id="Q6ZV50">
    <property type="development level" value="Tdark"/>
</dbReference>
<dbReference type="PRO" id="PR:Q6ZV50"/>
<dbReference type="Proteomes" id="UP000005640">
    <property type="component" value="Chromosome 2"/>
</dbReference>
<dbReference type="RNAct" id="Q6ZV50">
    <property type="molecule type" value="protein"/>
</dbReference>
<dbReference type="Bgee" id="ENSG00000196460">
    <property type="expression patterns" value="Expressed in male germ line stem cell (sensu Vertebrata) in testis and 97 other cell types or tissues"/>
</dbReference>
<dbReference type="ExpressionAtlas" id="Q6ZV50">
    <property type="expression patterns" value="baseline and differential"/>
</dbReference>
<dbReference type="GO" id="GO:0000785">
    <property type="term" value="C:chromatin"/>
    <property type="evidence" value="ECO:0000247"/>
    <property type="project" value="NTNU_SB"/>
</dbReference>
<dbReference type="GO" id="GO:0005634">
    <property type="term" value="C:nucleus"/>
    <property type="evidence" value="ECO:0007669"/>
    <property type="project" value="UniProtKB-SubCell"/>
</dbReference>
<dbReference type="GO" id="GO:0000981">
    <property type="term" value="F:DNA-binding transcription factor activity, RNA polymerase II-specific"/>
    <property type="evidence" value="ECO:0000247"/>
    <property type="project" value="NTNU_SB"/>
</dbReference>
<dbReference type="GO" id="GO:0000978">
    <property type="term" value="F:RNA polymerase II cis-regulatory region sequence-specific DNA binding"/>
    <property type="evidence" value="ECO:0000318"/>
    <property type="project" value="GO_Central"/>
</dbReference>
<dbReference type="GO" id="GO:0006357">
    <property type="term" value="P:regulation of transcription by RNA polymerase II"/>
    <property type="evidence" value="ECO:0000318"/>
    <property type="project" value="GO_Central"/>
</dbReference>
<dbReference type="FunFam" id="1.10.10.10:FF:000433">
    <property type="entry name" value="DNA-binding protein RFX8-like isoform X4"/>
    <property type="match status" value="1"/>
</dbReference>
<dbReference type="Gene3D" id="1.10.10.10">
    <property type="entry name" value="Winged helix-like DNA-binding domain superfamily/Winged helix DNA-binding domain"/>
    <property type="match status" value="1"/>
</dbReference>
<dbReference type="InterPro" id="IPR003150">
    <property type="entry name" value="DNA-bd_RFX"/>
</dbReference>
<dbReference type="InterPro" id="IPR039779">
    <property type="entry name" value="RFX-like"/>
</dbReference>
<dbReference type="InterPro" id="IPR036388">
    <property type="entry name" value="WH-like_DNA-bd_sf"/>
</dbReference>
<dbReference type="InterPro" id="IPR036390">
    <property type="entry name" value="WH_DNA-bd_sf"/>
</dbReference>
<dbReference type="PANTHER" id="PTHR12619:SF24">
    <property type="entry name" value="DNA-BINDING PROTEIN RFX8"/>
    <property type="match status" value="1"/>
</dbReference>
<dbReference type="PANTHER" id="PTHR12619">
    <property type="entry name" value="RFX TRANSCRIPTION FACTOR FAMILY"/>
    <property type="match status" value="1"/>
</dbReference>
<dbReference type="Pfam" id="PF25340">
    <property type="entry name" value="BCD_RFX"/>
    <property type="match status" value="1"/>
</dbReference>
<dbReference type="Pfam" id="PF02257">
    <property type="entry name" value="RFX_DNA_binding"/>
    <property type="match status" value="1"/>
</dbReference>
<dbReference type="SUPFAM" id="SSF46785">
    <property type="entry name" value="Winged helix' DNA-binding domain"/>
    <property type="match status" value="1"/>
</dbReference>
<dbReference type="PROSITE" id="PS51526">
    <property type="entry name" value="RFX_DBD"/>
    <property type="match status" value="1"/>
</dbReference>
<comment type="function">
    <text evidence="1">May be a transcription factor.</text>
</comment>
<comment type="subcellular location">
    <subcellularLocation>
        <location evidence="2">Nucleus</location>
    </subcellularLocation>
</comment>
<comment type="alternative products">
    <event type="alternative splicing"/>
    <isoform>
        <id>Q6ZV50-1</id>
        <name>1</name>
        <sequence type="displayed"/>
    </isoform>
    <isoform>
        <id>Q6ZV50-2</id>
        <name>2</name>
        <sequence type="described" ref="VSP_039427 VSP_039428 VSP_039430 VSP_039431"/>
    </isoform>
    <isoform>
        <id>Q6ZV50-3</id>
        <name>3</name>
        <sequence type="described" ref="VSP_039427 VSP_039429"/>
    </isoform>
</comment>
<comment type="miscellaneous">
    <molecule>Isoform 2</molecule>
    <text evidence="4">May be produced at very low levels due to a premature stop codon in the mRNA, leading to nonsense-mediated mRNA decay.</text>
</comment>
<comment type="similarity">
    <text evidence="2">Belongs to the RFX family.</text>
</comment>
<proteinExistence type="evidence at transcript level"/>
<keyword id="KW-0025">Alternative splicing</keyword>
<keyword id="KW-0238">DNA-binding</keyword>
<keyword id="KW-0539">Nucleus</keyword>
<keyword id="KW-1185">Reference proteome</keyword>
<keyword id="KW-0804">Transcription</keyword>
<keyword id="KW-0805">Transcription regulation</keyword>
<evidence type="ECO:0000250" key="1"/>
<evidence type="ECO:0000255" key="2">
    <source>
        <dbReference type="PROSITE-ProRule" id="PRU00858"/>
    </source>
</evidence>
<evidence type="ECO:0000303" key="3">
    <source>
    </source>
</evidence>
<evidence type="ECO:0000305" key="4"/>